<protein>
    <recommendedName>
        <fullName>Phenol-soluble modulin alpha 2 peptide</fullName>
    </recommendedName>
</protein>
<feature type="peptide" id="PRO_0000345047" description="Phenol-soluble modulin alpha 2 peptide">
    <location>
        <begin position="1"/>
        <end position="21"/>
    </location>
</feature>
<accession>P0C7Z4</accession>
<keyword id="KW-0204">Cytolysis</keyword>
<keyword id="KW-0843">Virulence</keyword>
<proteinExistence type="inferred from homology"/>
<evidence type="ECO:0000250" key="1">
    <source>
        <dbReference type="UniProtKB" id="A9JX06"/>
    </source>
</evidence>
<evidence type="ECO:0000305" key="2"/>
<gene>
    <name type="primary">psmA2</name>
    <name type="ordered locus">SaurJH9_0473.3</name>
</gene>
<dbReference type="EMBL" id="CP000703">
    <property type="status" value="NOT_ANNOTATED_CDS"/>
    <property type="molecule type" value="Genomic_DNA"/>
</dbReference>
<dbReference type="GO" id="GO:0031640">
    <property type="term" value="P:killing of cells of another organism"/>
    <property type="evidence" value="ECO:0007669"/>
    <property type="project" value="UniProtKB-KW"/>
</dbReference>
<dbReference type="InterPro" id="IPR031429">
    <property type="entry name" value="PSM_alpha"/>
</dbReference>
<dbReference type="NCBIfam" id="NF033425">
    <property type="entry name" value="PSM_alpha_1_2"/>
    <property type="match status" value="1"/>
</dbReference>
<dbReference type="Pfam" id="PF17063">
    <property type="entry name" value="PSMalpha"/>
    <property type="match status" value="1"/>
</dbReference>
<name>PSMA2_STAA9</name>
<organism>
    <name type="scientific">Staphylococcus aureus (strain JH9)</name>
    <dbReference type="NCBI Taxonomy" id="359786"/>
    <lineage>
        <taxon>Bacteria</taxon>
        <taxon>Bacillati</taxon>
        <taxon>Bacillota</taxon>
        <taxon>Bacilli</taxon>
        <taxon>Bacillales</taxon>
        <taxon>Staphylococcaceae</taxon>
        <taxon>Staphylococcus</taxon>
    </lineage>
</organism>
<reference key="1">
    <citation type="submission" date="2007-05" db="EMBL/GenBank/DDBJ databases">
        <title>Complete sequence of chromosome of Staphylococcus aureus subsp. aureus JH9.</title>
        <authorList>
            <consortium name="US DOE Joint Genome Institute"/>
            <person name="Copeland A."/>
            <person name="Lucas S."/>
            <person name="Lapidus A."/>
            <person name="Barry K."/>
            <person name="Detter J.C."/>
            <person name="Glavina del Rio T."/>
            <person name="Hammon N."/>
            <person name="Israni S."/>
            <person name="Pitluck S."/>
            <person name="Chain P."/>
            <person name="Malfatti S."/>
            <person name="Shin M."/>
            <person name="Vergez L."/>
            <person name="Schmutz J."/>
            <person name="Larimer F."/>
            <person name="Land M."/>
            <person name="Hauser L."/>
            <person name="Kyrpides N."/>
            <person name="Kim E."/>
            <person name="Tomasz A."/>
            <person name="Richardson P."/>
        </authorList>
    </citation>
    <scope>NUCLEOTIDE SEQUENCE [LARGE SCALE GENOMIC DNA]</scope>
    <source>
        <strain>JH9</strain>
    </source>
</reference>
<sequence>MGIIAGIIKFIKGLIEKFTGK</sequence>
<comment type="function">
    <text evidence="1">Peptide which can recruit, activate and subsequently lyse human neutrophils, thus eliminating the main cellular defense against infection.</text>
</comment>
<comment type="similarity">
    <text evidence="2">Belongs to the phenol-soluble modulin alpha peptides family.</text>
</comment>